<accession>Q0TLN8</accession>
<name>ZAPD_ECOL5</name>
<keyword id="KW-0131">Cell cycle</keyword>
<keyword id="KW-0132">Cell division</keyword>
<keyword id="KW-0963">Cytoplasm</keyword>
<keyword id="KW-0717">Septation</keyword>
<protein>
    <recommendedName>
        <fullName evidence="1">Cell division protein ZapD</fullName>
    </recommendedName>
    <alternativeName>
        <fullName evidence="1">Z ring-associated protein D</fullName>
    </alternativeName>
</protein>
<sequence>MQTQVLFEHPLNEKMRTWLRIEFLIQQLTVNLPIVDHAGALHFFRNVSELLDVFERGEVRTELLKELDRQQRKLQTWIGVPGVDQSRIEALIQQLKAAGSVLISAPRIGQFLREDRLIALVRQRLSIPGGCCSFDLPTLHIWLHLPQAQRDSQVETWIASLNPLTQALTMVLDLIRQSAPFRKQTSLNGFYQDNGGDADLLRLNLSLDSQLYPQISGHKSRFAIRFMPLDSENGQVPERLDFELACC</sequence>
<dbReference type="EMBL" id="CP000247">
    <property type="protein sequence ID" value="ABG68143.1"/>
    <property type="molecule type" value="Genomic_DNA"/>
</dbReference>
<dbReference type="RefSeq" id="WP_001194731.1">
    <property type="nucleotide sequence ID" value="NC_008253.1"/>
</dbReference>
<dbReference type="SMR" id="Q0TLN8"/>
<dbReference type="KEGG" id="ecp:ECP_0103"/>
<dbReference type="HOGENOM" id="CLU_076303_0_0_6"/>
<dbReference type="Proteomes" id="UP000009182">
    <property type="component" value="Chromosome"/>
</dbReference>
<dbReference type="GO" id="GO:0032153">
    <property type="term" value="C:cell division site"/>
    <property type="evidence" value="ECO:0007669"/>
    <property type="project" value="TreeGrafter"/>
</dbReference>
<dbReference type="GO" id="GO:0005737">
    <property type="term" value="C:cytoplasm"/>
    <property type="evidence" value="ECO:0007669"/>
    <property type="project" value="UniProtKB-SubCell"/>
</dbReference>
<dbReference type="GO" id="GO:0000917">
    <property type="term" value="P:division septum assembly"/>
    <property type="evidence" value="ECO:0007669"/>
    <property type="project" value="UniProtKB-KW"/>
</dbReference>
<dbReference type="GO" id="GO:0043093">
    <property type="term" value="P:FtsZ-dependent cytokinesis"/>
    <property type="evidence" value="ECO:0007669"/>
    <property type="project" value="UniProtKB-UniRule"/>
</dbReference>
<dbReference type="FunFam" id="1.10.3900.10:FF:000001">
    <property type="entry name" value="Cell division protein ZapD"/>
    <property type="match status" value="1"/>
</dbReference>
<dbReference type="FunFam" id="2.60.440.10:FF:000001">
    <property type="entry name" value="Cell division protein ZapD"/>
    <property type="match status" value="1"/>
</dbReference>
<dbReference type="Gene3D" id="1.10.3900.10">
    <property type="entry name" value="YacF-like"/>
    <property type="match status" value="1"/>
</dbReference>
<dbReference type="Gene3D" id="2.60.440.10">
    <property type="entry name" value="YacF-like domains"/>
    <property type="match status" value="1"/>
</dbReference>
<dbReference type="HAMAP" id="MF_01092">
    <property type="entry name" value="ZapD"/>
    <property type="match status" value="1"/>
</dbReference>
<dbReference type="InterPro" id="IPR009777">
    <property type="entry name" value="ZapD"/>
</dbReference>
<dbReference type="InterPro" id="IPR027462">
    <property type="entry name" value="ZapD_C"/>
</dbReference>
<dbReference type="InterPro" id="IPR036268">
    <property type="entry name" value="ZapD_sf"/>
</dbReference>
<dbReference type="NCBIfam" id="NF003653">
    <property type="entry name" value="PRK05287.1-1"/>
    <property type="match status" value="1"/>
</dbReference>
<dbReference type="NCBIfam" id="NF003655">
    <property type="entry name" value="PRK05287.1-3"/>
    <property type="match status" value="1"/>
</dbReference>
<dbReference type="PANTHER" id="PTHR39455">
    <property type="entry name" value="CELL DIVISION PROTEIN ZAPD"/>
    <property type="match status" value="1"/>
</dbReference>
<dbReference type="PANTHER" id="PTHR39455:SF1">
    <property type="entry name" value="CELL DIVISION PROTEIN ZAPD"/>
    <property type="match status" value="1"/>
</dbReference>
<dbReference type="Pfam" id="PF07072">
    <property type="entry name" value="ZapD"/>
    <property type="match status" value="1"/>
</dbReference>
<dbReference type="SUPFAM" id="SSF160950">
    <property type="entry name" value="YacF-like"/>
    <property type="match status" value="1"/>
</dbReference>
<comment type="function">
    <text evidence="1">Cell division factor that enhances FtsZ-ring assembly. Directly interacts with FtsZ and promotes bundling of FtsZ protofilaments, with a reduction in FtsZ GTPase activity.</text>
</comment>
<comment type="subunit">
    <text evidence="1">Interacts with FtsZ.</text>
</comment>
<comment type="subcellular location">
    <subcellularLocation>
        <location evidence="1">Cytoplasm</location>
    </subcellularLocation>
    <text evidence="1">Localizes to mid-cell in an FtsZ-dependent manner.</text>
</comment>
<comment type="similarity">
    <text evidence="1">Belongs to the ZapD family.</text>
</comment>
<proteinExistence type="inferred from homology"/>
<evidence type="ECO:0000255" key="1">
    <source>
        <dbReference type="HAMAP-Rule" id="MF_01092"/>
    </source>
</evidence>
<gene>
    <name evidence="1" type="primary">zapD</name>
    <name type="ordered locus">ECP_0103</name>
</gene>
<feature type="chain" id="PRO_1000064909" description="Cell division protein ZapD">
    <location>
        <begin position="1"/>
        <end position="247"/>
    </location>
</feature>
<organism>
    <name type="scientific">Escherichia coli O6:K15:H31 (strain 536 / UPEC)</name>
    <dbReference type="NCBI Taxonomy" id="362663"/>
    <lineage>
        <taxon>Bacteria</taxon>
        <taxon>Pseudomonadati</taxon>
        <taxon>Pseudomonadota</taxon>
        <taxon>Gammaproteobacteria</taxon>
        <taxon>Enterobacterales</taxon>
        <taxon>Enterobacteriaceae</taxon>
        <taxon>Escherichia</taxon>
    </lineage>
</organism>
<reference key="1">
    <citation type="journal article" date="2006" name="Mol. Microbiol.">
        <title>Role of pathogenicity island-associated integrases in the genome plasticity of uropathogenic Escherichia coli strain 536.</title>
        <authorList>
            <person name="Hochhut B."/>
            <person name="Wilde C."/>
            <person name="Balling G."/>
            <person name="Middendorf B."/>
            <person name="Dobrindt U."/>
            <person name="Brzuszkiewicz E."/>
            <person name="Gottschalk G."/>
            <person name="Carniel E."/>
            <person name="Hacker J."/>
        </authorList>
    </citation>
    <scope>NUCLEOTIDE SEQUENCE [LARGE SCALE GENOMIC DNA]</scope>
    <source>
        <strain>536 / UPEC</strain>
    </source>
</reference>